<feature type="chain" id="PRO_0000262060" description="UPF0246 protein YaaA">
    <location>
        <begin position="1"/>
        <end position="258"/>
    </location>
</feature>
<organism>
    <name type="scientific">Shigella boydii serotype 4 (strain Sb227)</name>
    <dbReference type="NCBI Taxonomy" id="300268"/>
    <lineage>
        <taxon>Bacteria</taxon>
        <taxon>Pseudomonadati</taxon>
        <taxon>Pseudomonadota</taxon>
        <taxon>Gammaproteobacteria</taxon>
        <taxon>Enterobacterales</taxon>
        <taxon>Enterobacteriaceae</taxon>
        <taxon>Shigella</taxon>
    </lineage>
</organism>
<dbReference type="EMBL" id="CP000036">
    <property type="protein sequence ID" value="ABB64742.1"/>
    <property type="molecule type" value="Genomic_DNA"/>
</dbReference>
<dbReference type="RefSeq" id="WP_000906196.1">
    <property type="nucleotide sequence ID" value="NC_007613.1"/>
</dbReference>
<dbReference type="SMR" id="Q326L6"/>
<dbReference type="KEGG" id="sbo:SBO_0005"/>
<dbReference type="HOGENOM" id="CLU_061989_0_0_6"/>
<dbReference type="Proteomes" id="UP000007067">
    <property type="component" value="Chromosome"/>
</dbReference>
<dbReference type="GO" id="GO:0005829">
    <property type="term" value="C:cytosol"/>
    <property type="evidence" value="ECO:0007669"/>
    <property type="project" value="TreeGrafter"/>
</dbReference>
<dbReference type="GO" id="GO:0033194">
    <property type="term" value="P:response to hydroperoxide"/>
    <property type="evidence" value="ECO:0007669"/>
    <property type="project" value="TreeGrafter"/>
</dbReference>
<dbReference type="HAMAP" id="MF_00652">
    <property type="entry name" value="UPF0246"/>
    <property type="match status" value="1"/>
</dbReference>
<dbReference type="InterPro" id="IPR005583">
    <property type="entry name" value="YaaA"/>
</dbReference>
<dbReference type="NCBIfam" id="NF002541">
    <property type="entry name" value="PRK02101.1-1"/>
    <property type="match status" value="1"/>
</dbReference>
<dbReference type="NCBIfam" id="NF002542">
    <property type="entry name" value="PRK02101.1-3"/>
    <property type="match status" value="1"/>
</dbReference>
<dbReference type="PANTHER" id="PTHR30283:SF4">
    <property type="entry name" value="PEROXIDE STRESS RESISTANCE PROTEIN YAAA"/>
    <property type="match status" value="1"/>
</dbReference>
<dbReference type="PANTHER" id="PTHR30283">
    <property type="entry name" value="PEROXIDE STRESS RESPONSE PROTEIN YAAA"/>
    <property type="match status" value="1"/>
</dbReference>
<dbReference type="Pfam" id="PF03883">
    <property type="entry name" value="H2O2_YaaD"/>
    <property type="match status" value="1"/>
</dbReference>
<protein>
    <recommendedName>
        <fullName evidence="1">UPF0246 protein YaaA</fullName>
    </recommendedName>
</protein>
<reference key="1">
    <citation type="journal article" date="2005" name="Nucleic Acids Res.">
        <title>Genome dynamics and diversity of Shigella species, the etiologic agents of bacillary dysentery.</title>
        <authorList>
            <person name="Yang F."/>
            <person name="Yang J."/>
            <person name="Zhang X."/>
            <person name="Chen L."/>
            <person name="Jiang Y."/>
            <person name="Yan Y."/>
            <person name="Tang X."/>
            <person name="Wang J."/>
            <person name="Xiong Z."/>
            <person name="Dong J."/>
            <person name="Xue Y."/>
            <person name="Zhu Y."/>
            <person name="Xu X."/>
            <person name="Sun L."/>
            <person name="Chen S."/>
            <person name="Nie H."/>
            <person name="Peng J."/>
            <person name="Xu J."/>
            <person name="Wang Y."/>
            <person name="Yuan Z."/>
            <person name="Wen Y."/>
            <person name="Yao Z."/>
            <person name="Shen Y."/>
            <person name="Qiang B."/>
            <person name="Hou Y."/>
            <person name="Yu J."/>
            <person name="Jin Q."/>
        </authorList>
    </citation>
    <scope>NUCLEOTIDE SEQUENCE [LARGE SCALE GENOMIC DNA]</scope>
    <source>
        <strain>Sb227</strain>
    </source>
</reference>
<comment type="similarity">
    <text evidence="1">Belongs to the UPF0246 family.</text>
</comment>
<name>YAAA_SHIBS</name>
<accession>Q326L6</accession>
<proteinExistence type="inferred from homology"/>
<gene>
    <name evidence="1" type="primary">yaaA</name>
    <name type="ordered locus">SBO_0005</name>
</gene>
<sequence>MLILISPAKTLDYQSPLTTTRYTLPELLDNSQQLIHEARKLTPPQISTLMRISDKLAGINAARFHDWQPDFTPANARQAILAFKGDVYTGLQAETFSEDDFDFAQQHLRMLSGLYGVLRPLDLMQPYRLEMGIRLENARGKDLYQFWGDIITNKLNEALAAQGDNVVINLASDEYFKSVKPKKLNAEIIKPVFLDEKNGKFKIISFYAKKARGLMSRFIIENRLTKPEQLTGFNSEGYFFDEASSSNGELVFKRYEQR</sequence>
<evidence type="ECO:0000255" key="1">
    <source>
        <dbReference type="HAMAP-Rule" id="MF_00652"/>
    </source>
</evidence>